<feature type="chain" id="PRO_1000120232" description="GMP synthase [glutamine-hydrolyzing]">
    <location>
        <begin position="1"/>
        <end position="539"/>
    </location>
</feature>
<feature type="domain" description="Glutamine amidotransferase type-1" evidence="1">
    <location>
        <begin position="4"/>
        <end position="202"/>
    </location>
</feature>
<feature type="domain" description="GMPS ATP-PPase" evidence="1">
    <location>
        <begin position="203"/>
        <end position="395"/>
    </location>
</feature>
<feature type="active site" description="Nucleophile" evidence="1">
    <location>
        <position position="81"/>
    </location>
</feature>
<feature type="active site" evidence="1">
    <location>
        <position position="176"/>
    </location>
</feature>
<feature type="active site" evidence="1">
    <location>
        <position position="178"/>
    </location>
</feature>
<feature type="binding site" evidence="1">
    <location>
        <begin position="230"/>
        <end position="236"/>
    </location>
    <ligand>
        <name>ATP</name>
        <dbReference type="ChEBI" id="CHEBI:30616"/>
    </ligand>
</feature>
<evidence type="ECO:0000255" key="1">
    <source>
        <dbReference type="HAMAP-Rule" id="MF_00344"/>
    </source>
</evidence>
<proteinExistence type="inferred from homology"/>
<sequence length="539" mass="59390">MHDKILILDFGSQVTQLIARRVREAHVYCEIHPNDVSDDFVREFAPKAVILSGSHASTYEDHQLRAPQAVWDLGVPVLGICYGMQTMAVQLGGKVEWSDHREFGYAEMRAHGHTRLLDGIEDFTTAEGHGMLKVWMSHGDKVAELPPGFALMASTPSCPIAGMADEARGYYAVQFHPEVTHTVKGRQIIERFVLQIAGAKPDWIMKNHIEEAVAKIREQVGDEEVILGLSGGVDSSVAAALIHRAIGDQLTCVFVDHGLLRLNEGKMVLDMFEGRLHAKVVHVDASDQFLGHLAGVTDPEAKRKIIGREFVEVFQAEAKKLSKAKWLAQGTIYPDVVESGGTKTKKATTIKSHHNVGGLPETLGLKLLEPLRDLFKDEVRELGVALGLPPEMVYRHPFPGPGLGVRILGEVKREYAELLRRADAIFIEELRNTTATAQDAAAGLCGEADVGKSWYDLTSQAFAVFLPVKSVGVMGDGRTYDYVTSLRAVQTTDFMTAHWAHLPYALLGRASNRIINEVRGINRVVYDISGKPPATIEWE</sequence>
<comment type="function">
    <text evidence="1">Catalyzes the synthesis of GMP from XMP.</text>
</comment>
<comment type="catalytic activity">
    <reaction evidence="1">
        <text>XMP + L-glutamine + ATP + H2O = GMP + L-glutamate + AMP + diphosphate + 2 H(+)</text>
        <dbReference type="Rhea" id="RHEA:11680"/>
        <dbReference type="ChEBI" id="CHEBI:15377"/>
        <dbReference type="ChEBI" id="CHEBI:15378"/>
        <dbReference type="ChEBI" id="CHEBI:29985"/>
        <dbReference type="ChEBI" id="CHEBI:30616"/>
        <dbReference type="ChEBI" id="CHEBI:33019"/>
        <dbReference type="ChEBI" id="CHEBI:57464"/>
        <dbReference type="ChEBI" id="CHEBI:58115"/>
        <dbReference type="ChEBI" id="CHEBI:58359"/>
        <dbReference type="ChEBI" id="CHEBI:456215"/>
        <dbReference type="EC" id="6.3.5.2"/>
    </reaction>
</comment>
<comment type="pathway">
    <text evidence="1">Purine metabolism; GMP biosynthesis; GMP from XMP (L-Gln route): step 1/1.</text>
</comment>
<comment type="subunit">
    <text evidence="1">Homodimer.</text>
</comment>
<gene>
    <name evidence="1" type="primary">guaA</name>
    <name type="ordered locus">Bcen2424_1989</name>
</gene>
<name>GUAA_BURCH</name>
<reference key="1">
    <citation type="submission" date="2006-08" db="EMBL/GenBank/DDBJ databases">
        <title>Complete sequence of chromosome 1 of Burkholderia cenocepacia HI2424.</title>
        <authorList>
            <person name="Copeland A."/>
            <person name="Lucas S."/>
            <person name="Lapidus A."/>
            <person name="Barry K."/>
            <person name="Detter J.C."/>
            <person name="Glavina del Rio T."/>
            <person name="Hammon N."/>
            <person name="Israni S."/>
            <person name="Pitluck S."/>
            <person name="Chain P."/>
            <person name="Malfatti S."/>
            <person name="Shin M."/>
            <person name="Vergez L."/>
            <person name="Schmutz J."/>
            <person name="Larimer F."/>
            <person name="Land M."/>
            <person name="Hauser L."/>
            <person name="Kyrpides N."/>
            <person name="Kim E."/>
            <person name="LiPuma J.J."/>
            <person name="Gonzalez C.F."/>
            <person name="Konstantinidis K."/>
            <person name="Tiedje J.M."/>
            <person name="Richardson P."/>
        </authorList>
    </citation>
    <scope>NUCLEOTIDE SEQUENCE [LARGE SCALE GENOMIC DNA]</scope>
    <source>
        <strain>HI2424</strain>
    </source>
</reference>
<dbReference type="EC" id="6.3.5.2" evidence="1"/>
<dbReference type="EMBL" id="CP000458">
    <property type="protein sequence ID" value="ABK08740.1"/>
    <property type="molecule type" value="Genomic_DNA"/>
</dbReference>
<dbReference type="RefSeq" id="WP_011549558.1">
    <property type="nucleotide sequence ID" value="NC_008542.1"/>
</dbReference>
<dbReference type="SMR" id="A0K8B3"/>
<dbReference type="MEROPS" id="C26.957"/>
<dbReference type="GeneID" id="83048786"/>
<dbReference type="KEGG" id="bch:Bcen2424_1989"/>
<dbReference type="HOGENOM" id="CLU_014340_0_5_4"/>
<dbReference type="UniPathway" id="UPA00189">
    <property type="reaction ID" value="UER00296"/>
</dbReference>
<dbReference type="GO" id="GO:0005829">
    <property type="term" value="C:cytosol"/>
    <property type="evidence" value="ECO:0007669"/>
    <property type="project" value="TreeGrafter"/>
</dbReference>
<dbReference type="GO" id="GO:0005524">
    <property type="term" value="F:ATP binding"/>
    <property type="evidence" value="ECO:0007669"/>
    <property type="project" value="UniProtKB-UniRule"/>
</dbReference>
<dbReference type="GO" id="GO:0003921">
    <property type="term" value="F:GMP synthase activity"/>
    <property type="evidence" value="ECO:0007669"/>
    <property type="project" value="InterPro"/>
</dbReference>
<dbReference type="CDD" id="cd01742">
    <property type="entry name" value="GATase1_GMP_Synthase"/>
    <property type="match status" value="1"/>
</dbReference>
<dbReference type="CDD" id="cd01997">
    <property type="entry name" value="GMP_synthase_C"/>
    <property type="match status" value="1"/>
</dbReference>
<dbReference type="FunFam" id="3.30.300.10:FF:000002">
    <property type="entry name" value="GMP synthase [glutamine-hydrolyzing]"/>
    <property type="match status" value="1"/>
</dbReference>
<dbReference type="FunFam" id="3.40.50.620:FF:000001">
    <property type="entry name" value="GMP synthase [glutamine-hydrolyzing]"/>
    <property type="match status" value="1"/>
</dbReference>
<dbReference type="FunFam" id="3.40.50.880:FF:000001">
    <property type="entry name" value="GMP synthase [glutamine-hydrolyzing]"/>
    <property type="match status" value="1"/>
</dbReference>
<dbReference type="Gene3D" id="3.30.300.10">
    <property type="match status" value="1"/>
</dbReference>
<dbReference type="Gene3D" id="3.40.50.880">
    <property type="match status" value="1"/>
</dbReference>
<dbReference type="Gene3D" id="3.40.50.620">
    <property type="entry name" value="HUPs"/>
    <property type="match status" value="1"/>
</dbReference>
<dbReference type="HAMAP" id="MF_00344">
    <property type="entry name" value="GMP_synthase"/>
    <property type="match status" value="1"/>
</dbReference>
<dbReference type="InterPro" id="IPR029062">
    <property type="entry name" value="Class_I_gatase-like"/>
</dbReference>
<dbReference type="InterPro" id="IPR017926">
    <property type="entry name" value="GATASE"/>
</dbReference>
<dbReference type="InterPro" id="IPR001674">
    <property type="entry name" value="GMP_synth_C"/>
</dbReference>
<dbReference type="InterPro" id="IPR004739">
    <property type="entry name" value="GMP_synth_GATase"/>
</dbReference>
<dbReference type="InterPro" id="IPR022955">
    <property type="entry name" value="GMP_synthase"/>
</dbReference>
<dbReference type="InterPro" id="IPR025777">
    <property type="entry name" value="GMPS_ATP_PPase_dom"/>
</dbReference>
<dbReference type="InterPro" id="IPR022310">
    <property type="entry name" value="NAD/GMP_synthase"/>
</dbReference>
<dbReference type="InterPro" id="IPR014729">
    <property type="entry name" value="Rossmann-like_a/b/a_fold"/>
</dbReference>
<dbReference type="NCBIfam" id="TIGR00884">
    <property type="entry name" value="guaA_Cterm"/>
    <property type="match status" value="1"/>
</dbReference>
<dbReference type="NCBIfam" id="TIGR00888">
    <property type="entry name" value="guaA_Nterm"/>
    <property type="match status" value="1"/>
</dbReference>
<dbReference type="NCBIfam" id="NF000848">
    <property type="entry name" value="PRK00074.1"/>
    <property type="match status" value="1"/>
</dbReference>
<dbReference type="PANTHER" id="PTHR11922:SF2">
    <property type="entry name" value="GMP SYNTHASE [GLUTAMINE-HYDROLYZING]"/>
    <property type="match status" value="1"/>
</dbReference>
<dbReference type="PANTHER" id="PTHR11922">
    <property type="entry name" value="GMP SYNTHASE-RELATED"/>
    <property type="match status" value="1"/>
</dbReference>
<dbReference type="Pfam" id="PF00117">
    <property type="entry name" value="GATase"/>
    <property type="match status" value="1"/>
</dbReference>
<dbReference type="Pfam" id="PF00958">
    <property type="entry name" value="GMP_synt_C"/>
    <property type="match status" value="1"/>
</dbReference>
<dbReference type="Pfam" id="PF02540">
    <property type="entry name" value="NAD_synthase"/>
    <property type="match status" value="1"/>
</dbReference>
<dbReference type="SUPFAM" id="SSF52402">
    <property type="entry name" value="Adenine nucleotide alpha hydrolases-like"/>
    <property type="match status" value="1"/>
</dbReference>
<dbReference type="SUPFAM" id="SSF52317">
    <property type="entry name" value="Class I glutamine amidotransferase-like"/>
    <property type="match status" value="1"/>
</dbReference>
<dbReference type="SUPFAM" id="SSF54810">
    <property type="entry name" value="GMP synthetase C-terminal dimerisation domain"/>
    <property type="match status" value="1"/>
</dbReference>
<dbReference type="PROSITE" id="PS51273">
    <property type="entry name" value="GATASE_TYPE_1"/>
    <property type="match status" value="1"/>
</dbReference>
<dbReference type="PROSITE" id="PS51553">
    <property type="entry name" value="GMPS_ATP_PPASE"/>
    <property type="match status" value="1"/>
</dbReference>
<accession>A0K8B3</accession>
<organism>
    <name type="scientific">Burkholderia cenocepacia (strain HI2424)</name>
    <dbReference type="NCBI Taxonomy" id="331272"/>
    <lineage>
        <taxon>Bacteria</taxon>
        <taxon>Pseudomonadati</taxon>
        <taxon>Pseudomonadota</taxon>
        <taxon>Betaproteobacteria</taxon>
        <taxon>Burkholderiales</taxon>
        <taxon>Burkholderiaceae</taxon>
        <taxon>Burkholderia</taxon>
        <taxon>Burkholderia cepacia complex</taxon>
    </lineage>
</organism>
<protein>
    <recommendedName>
        <fullName evidence="1">GMP synthase [glutamine-hydrolyzing]</fullName>
        <ecNumber evidence="1">6.3.5.2</ecNumber>
    </recommendedName>
    <alternativeName>
        <fullName evidence="1">GMP synthetase</fullName>
    </alternativeName>
    <alternativeName>
        <fullName evidence="1">Glutamine amidotransferase</fullName>
    </alternativeName>
</protein>
<keyword id="KW-0067">ATP-binding</keyword>
<keyword id="KW-0315">Glutamine amidotransferase</keyword>
<keyword id="KW-0332">GMP biosynthesis</keyword>
<keyword id="KW-0436">Ligase</keyword>
<keyword id="KW-0547">Nucleotide-binding</keyword>
<keyword id="KW-0658">Purine biosynthesis</keyword>